<organism>
    <name type="scientific">Parasynechococcus marenigrum (strain WH8102)</name>
    <dbReference type="NCBI Taxonomy" id="84588"/>
    <lineage>
        <taxon>Bacteria</taxon>
        <taxon>Bacillati</taxon>
        <taxon>Cyanobacteriota</taxon>
        <taxon>Cyanophyceae</taxon>
        <taxon>Synechococcales</taxon>
        <taxon>Prochlorococcaceae</taxon>
        <taxon>Parasynechococcus</taxon>
        <taxon>Parasynechococcus marenigrum</taxon>
    </lineage>
</organism>
<gene>
    <name evidence="1" type="primary">ruvC</name>
    <name type="ordered locus">SYNW0715</name>
</gene>
<reference key="1">
    <citation type="journal article" date="2003" name="Nature">
        <title>The genome of a motile marine Synechococcus.</title>
        <authorList>
            <person name="Palenik B."/>
            <person name="Brahamsha B."/>
            <person name="Larimer F.W."/>
            <person name="Land M.L."/>
            <person name="Hauser L."/>
            <person name="Chain P."/>
            <person name="Lamerdin J.E."/>
            <person name="Regala W."/>
            <person name="Allen E.E."/>
            <person name="McCarren J."/>
            <person name="Paulsen I.T."/>
            <person name="Dufresne A."/>
            <person name="Partensky F."/>
            <person name="Webb E.A."/>
            <person name="Waterbury J."/>
        </authorList>
    </citation>
    <scope>NUCLEOTIDE SEQUENCE [LARGE SCALE GENOMIC DNA]</scope>
    <source>
        <strain>WH8102</strain>
    </source>
</reference>
<accession>Q7U8A6</accession>
<feature type="chain" id="PRO_0000183137" description="Crossover junction endodeoxyribonuclease RuvC">
    <location>
        <begin position="1"/>
        <end position="154"/>
    </location>
</feature>
<feature type="active site" evidence="1">
    <location>
        <position position="7"/>
    </location>
</feature>
<feature type="active site" evidence="1">
    <location>
        <position position="67"/>
    </location>
</feature>
<feature type="active site" evidence="1">
    <location>
        <position position="139"/>
    </location>
</feature>
<feature type="binding site" evidence="1">
    <location>
        <position position="7"/>
    </location>
    <ligand>
        <name>Mg(2+)</name>
        <dbReference type="ChEBI" id="CHEBI:18420"/>
        <label>1</label>
    </ligand>
</feature>
<feature type="binding site" evidence="1">
    <location>
        <position position="67"/>
    </location>
    <ligand>
        <name>Mg(2+)</name>
        <dbReference type="ChEBI" id="CHEBI:18420"/>
        <label>2</label>
    </ligand>
</feature>
<feature type="binding site" evidence="1">
    <location>
        <position position="139"/>
    </location>
    <ligand>
        <name>Mg(2+)</name>
        <dbReference type="ChEBI" id="CHEBI:18420"/>
        <label>1</label>
    </ligand>
</feature>
<proteinExistence type="inferred from homology"/>
<sequence length="154" mass="17110">MRILGIDPGLARVGYGVIDTSGGHQRMLDCGIIRTDPGRSDGERMVEIASDLRQLIRAWRPELAAVEKFFFYRSSNTINVVQARGVVMMTLARFKVPVVEFPPMQIKLALAGFGHAEKDEVLEAVMRELDLTEPPRPDDAADALAVALTGWFQR</sequence>
<keyword id="KW-0963">Cytoplasm</keyword>
<keyword id="KW-0227">DNA damage</keyword>
<keyword id="KW-0233">DNA recombination</keyword>
<keyword id="KW-0234">DNA repair</keyword>
<keyword id="KW-0238">DNA-binding</keyword>
<keyword id="KW-0255">Endonuclease</keyword>
<keyword id="KW-0378">Hydrolase</keyword>
<keyword id="KW-0460">Magnesium</keyword>
<keyword id="KW-0479">Metal-binding</keyword>
<keyword id="KW-0540">Nuclease</keyword>
<name>RUVC_PARMW</name>
<protein>
    <recommendedName>
        <fullName evidence="1">Crossover junction endodeoxyribonuclease RuvC</fullName>
        <ecNumber evidence="1">3.1.21.10</ecNumber>
    </recommendedName>
    <alternativeName>
        <fullName evidence="1">Holliday junction nuclease RuvC</fullName>
    </alternativeName>
    <alternativeName>
        <fullName evidence="1">Holliday junction resolvase RuvC</fullName>
    </alternativeName>
</protein>
<comment type="function">
    <text evidence="1">The RuvA-RuvB-RuvC complex processes Holliday junction (HJ) DNA during genetic recombination and DNA repair. Endonuclease that resolves HJ intermediates. Cleaves cruciform DNA by making single-stranded nicks across the HJ at symmetrical positions within the homologous arms, yielding a 5'-phosphate and a 3'-hydroxyl group; requires a central core of homology in the junction. The consensus cleavage sequence is 5'-(A/T)TT(C/G)-3'. Cleavage occurs on the 3'-side of the TT dinucleotide at the point of strand exchange. HJ branch migration catalyzed by RuvA-RuvB allows RuvC to scan DNA until it finds its consensus sequence, where it cleaves and resolves the cruciform DNA.</text>
</comment>
<comment type="catalytic activity">
    <reaction evidence="1">
        <text>Endonucleolytic cleavage at a junction such as a reciprocal single-stranded crossover between two homologous DNA duplexes (Holliday junction).</text>
        <dbReference type="EC" id="3.1.21.10"/>
    </reaction>
</comment>
<comment type="cofactor">
    <cofactor evidence="1">
        <name>Mg(2+)</name>
        <dbReference type="ChEBI" id="CHEBI:18420"/>
    </cofactor>
    <text evidence="1">Binds 2 Mg(2+) ion per subunit.</text>
</comment>
<comment type="subunit">
    <text evidence="1">Homodimer which binds Holliday junction (HJ) DNA. The HJ becomes 2-fold symmetrical on binding to RuvC with unstacked arms; it has a different conformation from HJ DNA in complex with RuvA. In the full resolvosome a probable DNA-RuvA(4)-RuvB(12)-RuvC(2) complex forms which resolves the HJ.</text>
</comment>
<comment type="subcellular location">
    <subcellularLocation>
        <location evidence="1">Cytoplasm</location>
    </subcellularLocation>
</comment>
<comment type="similarity">
    <text evidence="1">Belongs to the RuvC family.</text>
</comment>
<evidence type="ECO:0000255" key="1">
    <source>
        <dbReference type="HAMAP-Rule" id="MF_00034"/>
    </source>
</evidence>
<dbReference type="EC" id="3.1.21.10" evidence="1"/>
<dbReference type="EMBL" id="BX569691">
    <property type="protein sequence ID" value="CAE07230.1"/>
    <property type="molecule type" value="Genomic_DNA"/>
</dbReference>
<dbReference type="RefSeq" id="WP_011127582.1">
    <property type="nucleotide sequence ID" value="NC_005070.1"/>
</dbReference>
<dbReference type="SMR" id="Q7U8A6"/>
<dbReference type="STRING" id="84588.SYNW0715"/>
<dbReference type="KEGG" id="syw:SYNW0715"/>
<dbReference type="eggNOG" id="COG0817">
    <property type="taxonomic scope" value="Bacteria"/>
</dbReference>
<dbReference type="HOGENOM" id="CLU_091257_3_1_3"/>
<dbReference type="Proteomes" id="UP000001422">
    <property type="component" value="Chromosome"/>
</dbReference>
<dbReference type="GO" id="GO:0005737">
    <property type="term" value="C:cytoplasm"/>
    <property type="evidence" value="ECO:0007669"/>
    <property type="project" value="UniProtKB-SubCell"/>
</dbReference>
<dbReference type="GO" id="GO:0048476">
    <property type="term" value="C:Holliday junction resolvase complex"/>
    <property type="evidence" value="ECO:0007669"/>
    <property type="project" value="UniProtKB-UniRule"/>
</dbReference>
<dbReference type="GO" id="GO:0008821">
    <property type="term" value="F:crossover junction DNA endonuclease activity"/>
    <property type="evidence" value="ECO:0007669"/>
    <property type="project" value="UniProtKB-UniRule"/>
</dbReference>
<dbReference type="GO" id="GO:0003677">
    <property type="term" value="F:DNA binding"/>
    <property type="evidence" value="ECO:0007669"/>
    <property type="project" value="UniProtKB-KW"/>
</dbReference>
<dbReference type="GO" id="GO:0000287">
    <property type="term" value="F:magnesium ion binding"/>
    <property type="evidence" value="ECO:0007669"/>
    <property type="project" value="UniProtKB-UniRule"/>
</dbReference>
<dbReference type="GO" id="GO:0006310">
    <property type="term" value="P:DNA recombination"/>
    <property type="evidence" value="ECO:0007669"/>
    <property type="project" value="UniProtKB-UniRule"/>
</dbReference>
<dbReference type="GO" id="GO:0006281">
    <property type="term" value="P:DNA repair"/>
    <property type="evidence" value="ECO:0007669"/>
    <property type="project" value="UniProtKB-UniRule"/>
</dbReference>
<dbReference type="CDD" id="cd16962">
    <property type="entry name" value="RuvC"/>
    <property type="match status" value="1"/>
</dbReference>
<dbReference type="FunFam" id="3.30.420.10:FF:000002">
    <property type="entry name" value="Crossover junction endodeoxyribonuclease RuvC"/>
    <property type="match status" value="1"/>
</dbReference>
<dbReference type="Gene3D" id="3.30.420.10">
    <property type="entry name" value="Ribonuclease H-like superfamily/Ribonuclease H"/>
    <property type="match status" value="1"/>
</dbReference>
<dbReference type="HAMAP" id="MF_00034">
    <property type="entry name" value="RuvC"/>
    <property type="match status" value="1"/>
</dbReference>
<dbReference type="InterPro" id="IPR012337">
    <property type="entry name" value="RNaseH-like_sf"/>
</dbReference>
<dbReference type="InterPro" id="IPR036397">
    <property type="entry name" value="RNaseH_sf"/>
</dbReference>
<dbReference type="InterPro" id="IPR020563">
    <property type="entry name" value="X-over_junc_endoDNase_Mg_BS"/>
</dbReference>
<dbReference type="InterPro" id="IPR002176">
    <property type="entry name" value="X-over_junc_endoDNase_RuvC"/>
</dbReference>
<dbReference type="NCBIfam" id="NF000711">
    <property type="entry name" value="PRK00039.2-1"/>
    <property type="match status" value="1"/>
</dbReference>
<dbReference type="PANTHER" id="PTHR30194">
    <property type="entry name" value="CROSSOVER JUNCTION ENDODEOXYRIBONUCLEASE RUVC"/>
    <property type="match status" value="1"/>
</dbReference>
<dbReference type="PANTHER" id="PTHR30194:SF3">
    <property type="entry name" value="CROSSOVER JUNCTION ENDODEOXYRIBONUCLEASE RUVC"/>
    <property type="match status" value="1"/>
</dbReference>
<dbReference type="Pfam" id="PF02075">
    <property type="entry name" value="RuvC"/>
    <property type="match status" value="1"/>
</dbReference>
<dbReference type="PRINTS" id="PR00696">
    <property type="entry name" value="RSOLVASERUVC"/>
</dbReference>
<dbReference type="SUPFAM" id="SSF53098">
    <property type="entry name" value="Ribonuclease H-like"/>
    <property type="match status" value="1"/>
</dbReference>
<dbReference type="PROSITE" id="PS01321">
    <property type="entry name" value="RUVC"/>
    <property type="match status" value="1"/>
</dbReference>